<feature type="chain" id="PRO_0000270099" description="Heme oxygenase (staphylobilin-producing)">
    <location>
        <begin position="1"/>
        <end position="104"/>
    </location>
</feature>
<feature type="domain" description="ABM" evidence="1">
    <location>
        <begin position="2"/>
        <end position="94"/>
    </location>
</feature>
<feature type="binding site" evidence="1">
    <location>
        <position position="6"/>
    </location>
    <ligand>
        <name>Fe cation</name>
        <dbReference type="ChEBI" id="CHEBI:24875"/>
    </ligand>
</feature>
<feature type="binding site" description="axial binding residue" evidence="1">
    <location>
        <position position="76"/>
    </location>
    <ligand>
        <name>heme</name>
        <dbReference type="ChEBI" id="CHEBI:30413"/>
    </ligand>
    <ligandPart>
        <name>Fe</name>
        <dbReference type="ChEBI" id="CHEBI:18248"/>
    </ligandPart>
</feature>
<feature type="site" description="Transition state stabilizer" evidence="1">
    <location>
        <position position="66"/>
    </location>
</feature>
<evidence type="ECO:0000255" key="1">
    <source>
        <dbReference type="HAMAP-Rule" id="MF_01272"/>
    </source>
</evidence>
<organism>
    <name type="scientific">Staphylococcus haemolyticus (strain JCSC1435)</name>
    <dbReference type="NCBI Taxonomy" id="279808"/>
    <lineage>
        <taxon>Bacteria</taxon>
        <taxon>Bacillati</taxon>
        <taxon>Bacillota</taxon>
        <taxon>Bacilli</taxon>
        <taxon>Bacillales</taxon>
        <taxon>Staphylococcaceae</taxon>
        <taxon>Staphylococcus</taxon>
    </lineage>
</organism>
<gene>
    <name type="primary">isdG</name>
    <name type="ordered locus">SH0867</name>
</gene>
<comment type="function">
    <text evidence="1">Allows bacterial pathogens to use the host heme as an iron source. Catalyzes the oxidative degradation of the heme macrocyclic porphyrin ring to the oxo-bilirubin chromophore staphylobilin (a mixture of the linear tetrapyrroles 5-oxo-delta-bilirubin and 15-oxo-beta-bilirubin) in the presence of a suitable electron donor such as ascorbate or NADPH--cytochrome P450 reductase, with subsequent release of free iron.</text>
</comment>
<comment type="catalytic activity">
    <reaction evidence="1">
        <text>heme b + 5 AH2 + 4 O2 + 2 H(+) = delta-staphylobilin + Fe(2+) + formaldehyde + 5 A + 4 H2O</text>
        <dbReference type="Rhea" id="RHEA:37039"/>
        <dbReference type="ChEBI" id="CHEBI:13193"/>
        <dbReference type="ChEBI" id="CHEBI:15377"/>
        <dbReference type="ChEBI" id="CHEBI:15378"/>
        <dbReference type="ChEBI" id="CHEBI:15379"/>
        <dbReference type="ChEBI" id="CHEBI:16842"/>
        <dbReference type="ChEBI" id="CHEBI:17499"/>
        <dbReference type="ChEBI" id="CHEBI:29033"/>
        <dbReference type="ChEBI" id="CHEBI:60344"/>
        <dbReference type="ChEBI" id="CHEBI:74361"/>
        <dbReference type="EC" id="1.14.99.48"/>
    </reaction>
</comment>
<comment type="catalytic activity">
    <reaction evidence="1">
        <text>heme b + 5 AH2 + 4 O2 + 2 H(+) = beta-staphylobilin + Fe(2+) + formaldehyde + 5 A + 4 H2O</text>
        <dbReference type="Rhea" id="RHEA:37363"/>
        <dbReference type="ChEBI" id="CHEBI:13193"/>
        <dbReference type="ChEBI" id="CHEBI:15377"/>
        <dbReference type="ChEBI" id="CHEBI:15378"/>
        <dbReference type="ChEBI" id="CHEBI:15379"/>
        <dbReference type="ChEBI" id="CHEBI:16842"/>
        <dbReference type="ChEBI" id="CHEBI:17499"/>
        <dbReference type="ChEBI" id="CHEBI:29033"/>
        <dbReference type="ChEBI" id="CHEBI:60344"/>
        <dbReference type="ChEBI" id="CHEBI:74362"/>
        <dbReference type="EC" id="1.14.99.48"/>
    </reaction>
</comment>
<comment type="subunit">
    <text evidence="1">Homodimer.</text>
</comment>
<comment type="subcellular location">
    <subcellularLocation>
        <location evidence="1">Cytoplasm</location>
    </subcellularLocation>
</comment>
<comment type="similarity">
    <text evidence="1">Belongs to the antibiotic biosynthesis monooxygenase family. Heme-degrading monooxygenase IsdG subfamily.</text>
</comment>
<protein>
    <recommendedName>
        <fullName evidence="1">Heme oxygenase (staphylobilin-producing)</fullName>
        <ecNumber evidence="1">1.14.99.48</ecNumber>
    </recommendedName>
    <alternativeName>
        <fullName evidence="1">Heme-degrading monooxygenase</fullName>
    </alternativeName>
    <alternativeName>
        <fullName evidence="1">Iron-regulated surface determinant</fullName>
    </alternativeName>
    <alternativeName>
        <fullName evidence="1">Iron-responsive surface determinant</fullName>
    </alternativeName>
</protein>
<proteinExistence type="inferred from homology"/>
<keyword id="KW-0963">Cytoplasm</keyword>
<keyword id="KW-0349">Heme</keyword>
<keyword id="KW-0408">Iron</keyword>
<keyword id="KW-0479">Metal-binding</keyword>
<keyword id="KW-0503">Monooxygenase</keyword>
<keyword id="KW-0560">Oxidoreductase</keyword>
<sequence length="104" mass="12025">MFVVTNRITVKKGFAEKMAPRFTKGGKIEALQGFHKIEVWKVTRDHENEDMYVNTWWETEKDFEAWTKSDAFKEAHQNRDKTSSESSPVISSEIVKATVLSTLN</sequence>
<reference key="1">
    <citation type="journal article" date="2005" name="J. Bacteriol.">
        <title>Whole-genome sequencing of Staphylococcus haemolyticus uncovers the extreme plasticity of its genome and the evolution of human-colonizing staphylococcal species.</title>
        <authorList>
            <person name="Takeuchi F."/>
            <person name="Watanabe S."/>
            <person name="Baba T."/>
            <person name="Yuzawa H."/>
            <person name="Ito T."/>
            <person name="Morimoto Y."/>
            <person name="Kuroda M."/>
            <person name="Cui L."/>
            <person name="Takahashi M."/>
            <person name="Ankai A."/>
            <person name="Baba S."/>
            <person name="Fukui S."/>
            <person name="Lee J.C."/>
            <person name="Hiramatsu K."/>
        </authorList>
    </citation>
    <scope>NUCLEOTIDE SEQUENCE [LARGE SCALE GENOMIC DNA]</scope>
    <source>
        <strain>JCSC1435</strain>
    </source>
</reference>
<accession>Q4L849</accession>
<dbReference type="EC" id="1.14.99.48" evidence="1"/>
<dbReference type="EMBL" id="AP006716">
    <property type="protein sequence ID" value="BAE04176.1"/>
    <property type="molecule type" value="Genomic_DNA"/>
</dbReference>
<dbReference type="RefSeq" id="WP_011275179.1">
    <property type="nucleotide sequence ID" value="NC_007168.1"/>
</dbReference>
<dbReference type="SMR" id="Q4L849"/>
<dbReference type="KEGG" id="sha:SH0867"/>
<dbReference type="eggNOG" id="COG2329">
    <property type="taxonomic scope" value="Bacteria"/>
</dbReference>
<dbReference type="HOGENOM" id="CLU_141544_2_1_9"/>
<dbReference type="OrthoDB" id="384737at2"/>
<dbReference type="Proteomes" id="UP000000543">
    <property type="component" value="Chromosome"/>
</dbReference>
<dbReference type="GO" id="GO:0005737">
    <property type="term" value="C:cytoplasm"/>
    <property type="evidence" value="ECO:0007669"/>
    <property type="project" value="UniProtKB-SubCell"/>
</dbReference>
<dbReference type="GO" id="GO:0020037">
    <property type="term" value="F:heme binding"/>
    <property type="evidence" value="ECO:0007669"/>
    <property type="project" value="UniProtKB-UniRule"/>
</dbReference>
<dbReference type="GO" id="GO:0004392">
    <property type="term" value="F:heme oxygenase (decyclizing) activity"/>
    <property type="evidence" value="ECO:0007669"/>
    <property type="project" value="UniProtKB-UniRule"/>
</dbReference>
<dbReference type="GO" id="GO:0005506">
    <property type="term" value="F:iron ion binding"/>
    <property type="evidence" value="ECO:0007669"/>
    <property type="project" value="UniProtKB-UniRule"/>
</dbReference>
<dbReference type="GO" id="GO:0042167">
    <property type="term" value="P:heme catabolic process"/>
    <property type="evidence" value="ECO:0007669"/>
    <property type="project" value="UniProtKB-UniRule"/>
</dbReference>
<dbReference type="GO" id="GO:0033212">
    <property type="term" value="P:iron import into cell"/>
    <property type="evidence" value="ECO:0007669"/>
    <property type="project" value="InterPro"/>
</dbReference>
<dbReference type="Gene3D" id="3.30.70.100">
    <property type="match status" value="1"/>
</dbReference>
<dbReference type="HAMAP" id="MF_01272">
    <property type="entry name" value="Heme_degrading_monooxygenase"/>
    <property type="match status" value="1"/>
</dbReference>
<dbReference type="InterPro" id="IPR007138">
    <property type="entry name" value="ABM_dom"/>
</dbReference>
<dbReference type="InterPro" id="IPR011008">
    <property type="entry name" value="Dimeric_a/b-barrel"/>
</dbReference>
<dbReference type="InterPro" id="IPR050404">
    <property type="entry name" value="Heme-degrading_MO"/>
</dbReference>
<dbReference type="InterPro" id="IPR023953">
    <property type="entry name" value="IsdG"/>
</dbReference>
<dbReference type="NCBIfam" id="NF009840">
    <property type="entry name" value="PRK13315.1"/>
    <property type="match status" value="1"/>
</dbReference>
<dbReference type="PANTHER" id="PTHR34474:SF4">
    <property type="entry name" value="HEME OXYGENASE (STAPHYLOBILIN-PRODUCING) 1"/>
    <property type="match status" value="1"/>
</dbReference>
<dbReference type="PANTHER" id="PTHR34474">
    <property type="entry name" value="SIGNAL TRANSDUCTION PROTEIN TRAP"/>
    <property type="match status" value="1"/>
</dbReference>
<dbReference type="Pfam" id="PF03992">
    <property type="entry name" value="ABM"/>
    <property type="match status" value="1"/>
</dbReference>
<dbReference type="SUPFAM" id="SSF54909">
    <property type="entry name" value="Dimeric alpha+beta barrel"/>
    <property type="match status" value="1"/>
</dbReference>
<dbReference type="PROSITE" id="PS51725">
    <property type="entry name" value="ABM"/>
    <property type="match status" value="1"/>
</dbReference>
<name>HDOX_STAHJ</name>